<sequence>MSETAGKGVTMPEIMQSSYPDETLYREKDDSIRPSRLDDFIGQEELRENLKVFLNAARDRGQAMDHTLFYGNPGLGKTTLAQIIAAELGVNLICTSGPVLERSGDLAAILTNLSKHDILFVDEIHRMPITVEEILYPALEDYKLDLVIGQGPAARTVKIELEPFTLVGATTRIGLISSPLRDRFGIISRLEFYTPEELSQIILRTSRILNVPITKKGAIEIGRRSRGTPRIANRLLRRVRDFAAVFGSATVDEELVNHALQKLDVDEKGLDQMDRKLLTVLIELFAGGPVGIKTLAVACSEEVRTIEDIYEPYLIQCGFMKRTPRGRMATVKAYKHLNLTD</sequence>
<keyword id="KW-0067">ATP-binding</keyword>
<keyword id="KW-0963">Cytoplasm</keyword>
<keyword id="KW-0227">DNA damage</keyword>
<keyword id="KW-0233">DNA recombination</keyword>
<keyword id="KW-0234">DNA repair</keyword>
<keyword id="KW-0238">DNA-binding</keyword>
<keyword id="KW-0378">Hydrolase</keyword>
<keyword id="KW-0547">Nucleotide-binding</keyword>
<keyword id="KW-1185">Reference proteome</keyword>
<accession>Q1MP36</accession>
<name>RUVB_LAWIP</name>
<dbReference type="EC" id="3.6.4.-" evidence="1"/>
<dbReference type="EMBL" id="AM180252">
    <property type="protein sequence ID" value="CAJ55241.1"/>
    <property type="molecule type" value="Genomic_DNA"/>
</dbReference>
<dbReference type="SMR" id="Q1MP36"/>
<dbReference type="STRING" id="363253.LI1187"/>
<dbReference type="KEGG" id="lip:LI1187"/>
<dbReference type="eggNOG" id="COG2255">
    <property type="taxonomic scope" value="Bacteria"/>
</dbReference>
<dbReference type="HOGENOM" id="CLU_055599_1_0_7"/>
<dbReference type="Proteomes" id="UP000002430">
    <property type="component" value="Chromosome"/>
</dbReference>
<dbReference type="GO" id="GO:0005737">
    <property type="term" value="C:cytoplasm"/>
    <property type="evidence" value="ECO:0007669"/>
    <property type="project" value="UniProtKB-SubCell"/>
</dbReference>
<dbReference type="GO" id="GO:0048476">
    <property type="term" value="C:Holliday junction resolvase complex"/>
    <property type="evidence" value="ECO:0007669"/>
    <property type="project" value="UniProtKB-UniRule"/>
</dbReference>
<dbReference type="GO" id="GO:0005524">
    <property type="term" value="F:ATP binding"/>
    <property type="evidence" value="ECO:0007669"/>
    <property type="project" value="UniProtKB-UniRule"/>
</dbReference>
<dbReference type="GO" id="GO:0016887">
    <property type="term" value="F:ATP hydrolysis activity"/>
    <property type="evidence" value="ECO:0007669"/>
    <property type="project" value="InterPro"/>
</dbReference>
<dbReference type="GO" id="GO:0000400">
    <property type="term" value="F:four-way junction DNA binding"/>
    <property type="evidence" value="ECO:0007669"/>
    <property type="project" value="UniProtKB-UniRule"/>
</dbReference>
<dbReference type="GO" id="GO:0009378">
    <property type="term" value="F:four-way junction helicase activity"/>
    <property type="evidence" value="ECO:0007669"/>
    <property type="project" value="InterPro"/>
</dbReference>
<dbReference type="GO" id="GO:0006310">
    <property type="term" value="P:DNA recombination"/>
    <property type="evidence" value="ECO:0007669"/>
    <property type="project" value="UniProtKB-UniRule"/>
</dbReference>
<dbReference type="GO" id="GO:0006281">
    <property type="term" value="P:DNA repair"/>
    <property type="evidence" value="ECO:0007669"/>
    <property type="project" value="UniProtKB-UniRule"/>
</dbReference>
<dbReference type="CDD" id="cd00009">
    <property type="entry name" value="AAA"/>
    <property type="match status" value="1"/>
</dbReference>
<dbReference type="Gene3D" id="1.10.8.60">
    <property type="match status" value="1"/>
</dbReference>
<dbReference type="Gene3D" id="3.40.50.300">
    <property type="entry name" value="P-loop containing nucleotide triphosphate hydrolases"/>
    <property type="match status" value="1"/>
</dbReference>
<dbReference type="Gene3D" id="1.10.10.10">
    <property type="entry name" value="Winged helix-like DNA-binding domain superfamily/Winged helix DNA-binding domain"/>
    <property type="match status" value="1"/>
</dbReference>
<dbReference type="HAMAP" id="MF_00016">
    <property type="entry name" value="DNA_HJ_migration_RuvB"/>
    <property type="match status" value="1"/>
</dbReference>
<dbReference type="InterPro" id="IPR003593">
    <property type="entry name" value="AAA+_ATPase"/>
</dbReference>
<dbReference type="InterPro" id="IPR041445">
    <property type="entry name" value="AAA_lid_4"/>
</dbReference>
<dbReference type="InterPro" id="IPR004605">
    <property type="entry name" value="DNA_helicase_Holl-junc_RuvB"/>
</dbReference>
<dbReference type="InterPro" id="IPR027417">
    <property type="entry name" value="P-loop_NTPase"/>
</dbReference>
<dbReference type="InterPro" id="IPR008824">
    <property type="entry name" value="RuvB-like_N"/>
</dbReference>
<dbReference type="InterPro" id="IPR008823">
    <property type="entry name" value="RuvB_C"/>
</dbReference>
<dbReference type="InterPro" id="IPR036388">
    <property type="entry name" value="WH-like_DNA-bd_sf"/>
</dbReference>
<dbReference type="InterPro" id="IPR036390">
    <property type="entry name" value="WH_DNA-bd_sf"/>
</dbReference>
<dbReference type="NCBIfam" id="NF000868">
    <property type="entry name" value="PRK00080.1"/>
    <property type="match status" value="1"/>
</dbReference>
<dbReference type="NCBIfam" id="TIGR00635">
    <property type="entry name" value="ruvB"/>
    <property type="match status" value="1"/>
</dbReference>
<dbReference type="PANTHER" id="PTHR42848">
    <property type="match status" value="1"/>
</dbReference>
<dbReference type="PANTHER" id="PTHR42848:SF1">
    <property type="entry name" value="HOLLIDAY JUNCTION BRANCH MIGRATION COMPLEX SUBUNIT RUVB"/>
    <property type="match status" value="1"/>
</dbReference>
<dbReference type="Pfam" id="PF17864">
    <property type="entry name" value="AAA_lid_4"/>
    <property type="match status" value="1"/>
</dbReference>
<dbReference type="Pfam" id="PF05491">
    <property type="entry name" value="RuvB_C"/>
    <property type="match status" value="1"/>
</dbReference>
<dbReference type="Pfam" id="PF05496">
    <property type="entry name" value="RuvB_N"/>
    <property type="match status" value="1"/>
</dbReference>
<dbReference type="SMART" id="SM00382">
    <property type="entry name" value="AAA"/>
    <property type="match status" value="1"/>
</dbReference>
<dbReference type="SUPFAM" id="SSF52540">
    <property type="entry name" value="P-loop containing nucleoside triphosphate hydrolases"/>
    <property type="match status" value="1"/>
</dbReference>
<dbReference type="SUPFAM" id="SSF46785">
    <property type="entry name" value="Winged helix' DNA-binding domain"/>
    <property type="match status" value="1"/>
</dbReference>
<gene>
    <name evidence="1" type="primary">ruvB</name>
    <name type="ordered locus">LI1187</name>
</gene>
<organism>
    <name type="scientific">Lawsonia intracellularis (strain PHE/MN1-00)</name>
    <dbReference type="NCBI Taxonomy" id="363253"/>
    <lineage>
        <taxon>Bacteria</taxon>
        <taxon>Pseudomonadati</taxon>
        <taxon>Thermodesulfobacteriota</taxon>
        <taxon>Desulfovibrionia</taxon>
        <taxon>Desulfovibrionales</taxon>
        <taxon>Desulfovibrionaceae</taxon>
        <taxon>Lawsonia</taxon>
    </lineage>
</organism>
<protein>
    <recommendedName>
        <fullName evidence="1">Holliday junction branch migration complex subunit RuvB</fullName>
        <ecNumber evidence="1">3.6.4.-</ecNumber>
    </recommendedName>
</protein>
<reference key="1">
    <citation type="submission" date="2005-11" db="EMBL/GenBank/DDBJ databases">
        <title>The complete genome sequence of Lawsonia intracellularis: the causative agent of proliferative enteropathy.</title>
        <authorList>
            <person name="Kaur K."/>
            <person name="Zhang Q."/>
            <person name="Beckler D."/>
            <person name="Munir S."/>
            <person name="Li L."/>
            <person name="Kinsley K."/>
            <person name="Herron L."/>
            <person name="Peterson A."/>
            <person name="May B."/>
            <person name="Singh S."/>
            <person name="Gebhart C."/>
            <person name="Kapur V."/>
        </authorList>
    </citation>
    <scope>NUCLEOTIDE SEQUENCE [LARGE SCALE GENOMIC DNA]</scope>
    <source>
        <strain>PHE/MN1-00</strain>
    </source>
</reference>
<feature type="chain" id="PRO_0000322809" description="Holliday junction branch migration complex subunit RuvB">
    <location>
        <begin position="1"/>
        <end position="341"/>
    </location>
</feature>
<feature type="region of interest" description="Disordered" evidence="2">
    <location>
        <begin position="1"/>
        <end position="22"/>
    </location>
</feature>
<feature type="region of interest" description="Large ATPase domain (RuvB-L)" evidence="1">
    <location>
        <begin position="4"/>
        <end position="193"/>
    </location>
</feature>
<feature type="region of interest" description="Small ATPAse domain (RuvB-S)" evidence="1">
    <location>
        <begin position="194"/>
        <end position="264"/>
    </location>
</feature>
<feature type="region of interest" description="Head domain (RuvB-H)" evidence="1">
    <location>
        <begin position="267"/>
        <end position="341"/>
    </location>
</feature>
<feature type="binding site" evidence="1">
    <location>
        <position position="32"/>
    </location>
    <ligand>
        <name>ATP</name>
        <dbReference type="ChEBI" id="CHEBI:30616"/>
    </ligand>
</feature>
<feature type="binding site" evidence="1">
    <location>
        <position position="33"/>
    </location>
    <ligand>
        <name>ATP</name>
        <dbReference type="ChEBI" id="CHEBI:30616"/>
    </ligand>
</feature>
<feature type="binding site" evidence="1">
    <location>
        <position position="74"/>
    </location>
    <ligand>
        <name>ATP</name>
        <dbReference type="ChEBI" id="CHEBI:30616"/>
    </ligand>
</feature>
<feature type="binding site" evidence="1">
    <location>
        <position position="77"/>
    </location>
    <ligand>
        <name>ATP</name>
        <dbReference type="ChEBI" id="CHEBI:30616"/>
    </ligand>
</feature>
<feature type="binding site" evidence="1">
    <location>
        <position position="78"/>
    </location>
    <ligand>
        <name>ATP</name>
        <dbReference type="ChEBI" id="CHEBI:30616"/>
    </ligand>
</feature>
<feature type="binding site" evidence="1">
    <location>
        <position position="78"/>
    </location>
    <ligand>
        <name>Mg(2+)</name>
        <dbReference type="ChEBI" id="CHEBI:18420"/>
    </ligand>
</feature>
<feature type="binding site" evidence="1">
    <location>
        <position position="79"/>
    </location>
    <ligand>
        <name>ATP</name>
        <dbReference type="ChEBI" id="CHEBI:30616"/>
    </ligand>
</feature>
<feature type="binding site" evidence="1">
    <location>
        <begin position="140"/>
        <end position="142"/>
    </location>
    <ligand>
        <name>ATP</name>
        <dbReference type="ChEBI" id="CHEBI:30616"/>
    </ligand>
</feature>
<feature type="binding site" evidence="1">
    <location>
        <position position="183"/>
    </location>
    <ligand>
        <name>ATP</name>
        <dbReference type="ChEBI" id="CHEBI:30616"/>
    </ligand>
</feature>
<feature type="binding site" evidence="1">
    <location>
        <position position="193"/>
    </location>
    <ligand>
        <name>ATP</name>
        <dbReference type="ChEBI" id="CHEBI:30616"/>
    </ligand>
</feature>
<feature type="binding site" evidence="1">
    <location>
        <position position="230"/>
    </location>
    <ligand>
        <name>ATP</name>
        <dbReference type="ChEBI" id="CHEBI:30616"/>
    </ligand>
</feature>
<feature type="binding site" evidence="1">
    <location>
        <position position="322"/>
    </location>
    <ligand>
        <name>DNA</name>
        <dbReference type="ChEBI" id="CHEBI:16991"/>
    </ligand>
</feature>
<feature type="binding site" evidence="1">
    <location>
        <position position="327"/>
    </location>
    <ligand>
        <name>DNA</name>
        <dbReference type="ChEBI" id="CHEBI:16991"/>
    </ligand>
</feature>
<evidence type="ECO:0000255" key="1">
    <source>
        <dbReference type="HAMAP-Rule" id="MF_00016"/>
    </source>
</evidence>
<evidence type="ECO:0000256" key="2">
    <source>
        <dbReference type="SAM" id="MobiDB-lite"/>
    </source>
</evidence>
<proteinExistence type="inferred from homology"/>
<comment type="function">
    <text evidence="1">The RuvA-RuvB-RuvC complex processes Holliday junction (HJ) DNA during genetic recombination and DNA repair, while the RuvA-RuvB complex plays an important role in the rescue of blocked DNA replication forks via replication fork reversal (RFR). RuvA specifically binds to HJ cruciform DNA, conferring on it an open structure. The RuvB hexamer acts as an ATP-dependent pump, pulling dsDNA into and through the RuvAB complex. RuvB forms 2 homohexamers on either side of HJ DNA bound by 1 or 2 RuvA tetramers; 4 subunits per hexamer contact DNA at a time. Coordinated motions by a converter formed by DNA-disengaged RuvB subunits stimulates ATP hydrolysis and nucleotide exchange. Immobilization of the converter enables RuvB to convert the ATP-contained energy into a lever motion, pulling 2 nucleotides of DNA out of the RuvA tetramer per ATP hydrolyzed, thus driving DNA branch migration. The RuvB motors rotate together with the DNA substrate, which together with the progressing nucleotide cycle form the mechanistic basis for DNA recombination by continuous HJ branch migration. Branch migration allows RuvC to scan DNA until it finds its consensus sequence, where it cleaves and resolves cruciform DNA.</text>
</comment>
<comment type="catalytic activity">
    <reaction evidence="1">
        <text>ATP + H2O = ADP + phosphate + H(+)</text>
        <dbReference type="Rhea" id="RHEA:13065"/>
        <dbReference type="ChEBI" id="CHEBI:15377"/>
        <dbReference type="ChEBI" id="CHEBI:15378"/>
        <dbReference type="ChEBI" id="CHEBI:30616"/>
        <dbReference type="ChEBI" id="CHEBI:43474"/>
        <dbReference type="ChEBI" id="CHEBI:456216"/>
    </reaction>
</comment>
<comment type="subunit">
    <text evidence="1">Homohexamer. Forms an RuvA(8)-RuvB(12)-Holliday junction (HJ) complex. HJ DNA is sandwiched between 2 RuvA tetramers; dsDNA enters through RuvA and exits via RuvB. An RuvB hexamer assembles on each DNA strand where it exits the tetramer. Each RuvB hexamer is contacted by two RuvA subunits (via domain III) on 2 adjacent RuvB subunits; this complex drives branch migration. In the full resolvosome a probable DNA-RuvA(4)-RuvB(12)-RuvC(2) complex forms which resolves the HJ.</text>
</comment>
<comment type="subcellular location">
    <subcellularLocation>
        <location evidence="1">Cytoplasm</location>
    </subcellularLocation>
</comment>
<comment type="domain">
    <text evidence="1">Has 3 domains, the large (RuvB-L) and small ATPase (RuvB-S) domains and the C-terminal head (RuvB-H) domain. The head domain binds DNA, while the ATPase domains jointly bind ATP, ADP or are empty depending on the state of the subunit in the translocation cycle. During a single DNA translocation step the structure of each domain remains the same, but their relative positions change.</text>
</comment>
<comment type="similarity">
    <text evidence="1">Belongs to the RuvB family.</text>
</comment>